<feature type="chain" id="PRO_0000077045" description="Chitinases 70, 30, and 20.5 kDa">
    <location>
        <begin position="1"/>
        <end position="74" status="greater than"/>
    </location>
</feature>
<feature type="region of interest" description="N-terminus of 70 kDa chitinase">
    <location>
        <begin position="1"/>
        <end position="27"/>
    </location>
</feature>
<feature type="region of interest" description="N-terminus of 30 kDa chitinase">
    <location>
        <begin position="28"/>
        <end position="52"/>
    </location>
</feature>
<feature type="region of interest" description="N-terminus of 20.5 kDa chitinase">
    <location>
        <begin position="53"/>
        <end position="74"/>
    </location>
</feature>
<feature type="non-consecutive residues" evidence="1">
    <location>
        <begin position="27"/>
        <end position="28"/>
    </location>
</feature>
<feature type="non-consecutive residues" evidence="1">
    <location>
        <begin position="52"/>
        <end position="53"/>
    </location>
</feature>
<feature type="non-terminal residue">
    <location>
        <position position="74"/>
    </location>
</feature>
<sequence>XTSATATYAKTQDWGSCFEGKWTIKNTAACSSYPSWVAGRSYAAGDIVYYTDXGYTDLPVSRQKMCQNGMVTNC</sequence>
<evidence type="ECO:0000305" key="1"/>
<dbReference type="EC" id="3.2.1.14"/>
<dbReference type="PIR" id="A44908">
    <property type="entry name" value="A44908"/>
</dbReference>
<dbReference type="PIR" id="B44908">
    <property type="entry name" value="B44908"/>
</dbReference>
<dbReference type="PIR" id="D44908">
    <property type="entry name" value="D44908"/>
</dbReference>
<dbReference type="GO" id="GO:0008843">
    <property type="term" value="F:endochitinase activity"/>
    <property type="evidence" value="ECO:0007669"/>
    <property type="project" value="UniProtKB-EC"/>
</dbReference>
<dbReference type="GO" id="GO:0006032">
    <property type="term" value="P:chitin catabolic process"/>
    <property type="evidence" value="ECO:0007669"/>
    <property type="project" value="UniProtKB-KW"/>
</dbReference>
<dbReference type="GO" id="GO:0000272">
    <property type="term" value="P:polysaccharide catabolic process"/>
    <property type="evidence" value="ECO:0007669"/>
    <property type="project" value="UniProtKB-KW"/>
</dbReference>
<dbReference type="Gene3D" id="2.10.10.20">
    <property type="entry name" value="Carbohydrate-binding module superfamily 5/12"/>
    <property type="match status" value="1"/>
</dbReference>
<name>CHI1_STROI</name>
<reference key="1">
    <citation type="journal article" date="1992" name="J. Bacteriol.">
        <title>Chitinases of Streptomyces olivaceoviridis and significance of processing for multiplicity.</title>
        <authorList>
            <person name="Romaguera A."/>
            <person name="Menge U."/>
            <person name="Breves R."/>
            <person name="Diekmann H."/>
        </authorList>
    </citation>
    <scope>PROTEIN SEQUENCE</scope>
    <source>
        <strain>ATCC 11238 / DSM 41433 / NCIB 8592 / QM B814</strain>
    </source>
</reference>
<protein>
    <recommendedName>
        <fullName>Chitinases 70, 30, and 20.5 kDa</fullName>
        <ecNumber>3.2.1.14</ecNumber>
    </recommendedName>
</protein>
<comment type="function">
    <text>Able to cleave chitin oligomers from N=3 to 6.</text>
</comment>
<comment type="catalytic activity">
    <reaction>
        <text>Random endo-hydrolysis of N-acetyl-beta-D-glucosaminide (1-&gt;4)-beta-linkages in chitin and chitodextrins.</text>
        <dbReference type="EC" id="3.2.1.14"/>
    </reaction>
</comment>
<comment type="subunit">
    <text>Homodimer, but homotrimers and homotetramers could be observed for the 20.5 and 30 kDa chitinases.</text>
</comment>
<comment type="PTM">
    <text>The 70 kDa chitinase is probably the precursor protein of the 30 and 20.5 kDa chitinases.</text>
</comment>
<comment type="similarity">
    <text evidence="1">Belongs to the glycosyl hydrolase 18 family. Chitinase class II subfamily.</text>
</comment>
<organism>
    <name type="scientific">Streptomyces olivaceoviridis</name>
    <name type="common">Streptomyces corchorusii</name>
    <dbReference type="NCBI Taxonomy" id="1921"/>
    <lineage>
        <taxon>Bacteria</taxon>
        <taxon>Bacillati</taxon>
        <taxon>Actinomycetota</taxon>
        <taxon>Actinomycetes</taxon>
        <taxon>Kitasatosporales</taxon>
        <taxon>Streptomycetaceae</taxon>
        <taxon>Streptomyces</taxon>
    </lineage>
</organism>
<accession>P29115</accession>
<keyword id="KW-0119">Carbohydrate metabolism</keyword>
<keyword id="KW-0146">Chitin degradation</keyword>
<keyword id="KW-0903">Direct protein sequencing</keyword>
<keyword id="KW-0326">Glycosidase</keyword>
<keyword id="KW-0378">Hydrolase</keyword>
<keyword id="KW-0624">Polysaccharide degradation</keyword>
<proteinExistence type="evidence at protein level"/>